<sequence length="461" mass="48671">MNTSELETLIRNILSEQLAPAKAEVKGNGIFPSVSEAIDAAHQAFLRYQQCPLKTRSAIINALREELTPHLASLAAESAAETGMGNKEDKFLKNKAALDNTPGIEDLTTTALTGDGGMVLFEYSPFGVIGSVAPSTNPTETIINNSISMLAAGNSVYFSPHPGAKAVSLKLITMIEDIAFRCCGIRNLVVTVTEPTFEATQQMMAHPKIAVLAITGGPGIVAMGMKSGKKVIGAGAGNPPCIVDETADLVKAAEDIINGASFDFNLPCIAEKSLIVVDAVAERLVQQMQSFGAMRLNSEEIDKLRAVCLPEGIANKQLVGKSPATLLEAAGIPVPAKAPRLLIGIVKADDPWVTSEQLMPMLPIVTVSDFDSALTLALKVEEGLHHTAIMHSQNVSRLNLAARTLQTSIFVKNGPSYAGIGVGGEGFTTFTIATPTGEGTTSARTFARSRRCVLTNGFSIR</sequence>
<evidence type="ECO:0000250" key="1">
    <source>
        <dbReference type="UniProtKB" id="Q9XDN1"/>
    </source>
</evidence>
<evidence type="ECO:0000269" key="2">
    <source>
    </source>
</evidence>
<evidence type="ECO:0000269" key="3">
    <source>
    </source>
</evidence>
<evidence type="ECO:0000303" key="4">
    <source>
    </source>
</evidence>
<evidence type="ECO:0000305" key="5"/>
<evidence type="ECO:0000305" key="6">
    <source>
    </source>
</evidence>
<name>PDUP_CITFR</name>
<dbReference type="EC" id="1.2.1.87" evidence="1"/>
<dbReference type="EMBL" id="AM498294">
    <property type="protein sequence ID" value="CAM57296.1"/>
    <property type="molecule type" value="Genomic_DNA"/>
</dbReference>
<dbReference type="SMR" id="B1VB75"/>
<dbReference type="UniPathway" id="UPA00621"/>
<dbReference type="GO" id="GO:0031469">
    <property type="term" value="C:bacterial microcompartment"/>
    <property type="evidence" value="ECO:0007669"/>
    <property type="project" value="UniProtKB-SubCell"/>
</dbReference>
<dbReference type="GO" id="GO:0008774">
    <property type="term" value="F:acetaldehyde dehydrogenase (acetylating) activity"/>
    <property type="evidence" value="ECO:0007669"/>
    <property type="project" value="InterPro"/>
</dbReference>
<dbReference type="GO" id="GO:0051144">
    <property type="term" value="P:propanediol catabolic process"/>
    <property type="evidence" value="ECO:0007669"/>
    <property type="project" value="UniProtKB-UniPathway"/>
</dbReference>
<dbReference type="CDD" id="cd07121">
    <property type="entry name" value="ALDH_EutE"/>
    <property type="match status" value="1"/>
</dbReference>
<dbReference type="Gene3D" id="3.40.605.10">
    <property type="entry name" value="Aldehyde Dehydrogenase, Chain A, domain 1"/>
    <property type="match status" value="1"/>
</dbReference>
<dbReference type="Gene3D" id="3.40.309.10">
    <property type="entry name" value="Aldehyde Dehydrogenase, Chain A, domain 2"/>
    <property type="match status" value="1"/>
</dbReference>
<dbReference type="InterPro" id="IPR012408">
    <property type="entry name" value="Acetald_propionald_DH-rel"/>
</dbReference>
<dbReference type="InterPro" id="IPR016161">
    <property type="entry name" value="Ald_DH/histidinol_DH"/>
</dbReference>
<dbReference type="InterPro" id="IPR016163">
    <property type="entry name" value="Ald_DH_C"/>
</dbReference>
<dbReference type="InterPro" id="IPR016162">
    <property type="entry name" value="Ald_DH_N"/>
</dbReference>
<dbReference type="InterPro" id="IPR015590">
    <property type="entry name" value="Aldehyde_DH_dom"/>
</dbReference>
<dbReference type="NCBIfam" id="NF011927">
    <property type="entry name" value="PRK15398.1"/>
    <property type="match status" value="1"/>
</dbReference>
<dbReference type="PANTHER" id="PTHR11699">
    <property type="entry name" value="ALDEHYDE DEHYDROGENASE-RELATED"/>
    <property type="match status" value="1"/>
</dbReference>
<dbReference type="Pfam" id="PF00171">
    <property type="entry name" value="Aldedh"/>
    <property type="match status" value="1"/>
</dbReference>
<dbReference type="PIRSF" id="PIRSF036410">
    <property type="entry name" value="EutE_PduP"/>
    <property type="match status" value="1"/>
</dbReference>
<dbReference type="SUPFAM" id="SSF53720">
    <property type="entry name" value="ALDH-like"/>
    <property type="match status" value="1"/>
</dbReference>
<reference key="1">
    <citation type="journal article" date="2008" name="J. Biol. Chem.">
        <title>Biochemical and Structural Insights into Bacterial Organelle Form and Biogenesis.</title>
        <authorList>
            <person name="Parsons J.B."/>
            <person name="Dinesh S.D."/>
            <person name="Deery E."/>
            <person name="Leech H.K."/>
            <person name="Brindley A.A."/>
            <person name="Heldt D."/>
            <person name="Frank S."/>
            <person name="Smales C.M."/>
            <person name="Lunsdorf H."/>
            <person name="Rambach A."/>
            <person name="Gass M.H."/>
            <person name="Bleloch A."/>
            <person name="McClean K.J."/>
            <person name="Munro A.W."/>
            <person name="Rigby S.E.J."/>
            <person name="Warren M.J."/>
            <person name="Prentice M.B."/>
        </authorList>
    </citation>
    <scope>NUCLEOTIDE SEQUENCE [GENOMIC DNA]</scope>
    <scope>FUNCTION</scope>
    <scope>IDENTIFICATION BY MASS SPECTROMETRY</scope>
    <scope>PATHWAY</scope>
    <scope>SUBCELLULAR LOCATION</scope>
</reference>
<reference key="2">
    <citation type="journal article" date="2014" name="ACS Synth. Biol.">
        <title>Solution structure of a bacterial microcompartment targeting peptide and its application in the construction of an ethanol bioreactor.</title>
        <authorList>
            <person name="Lawrence A.D."/>
            <person name="Frank S."/>
            <person name="Newnham S."/>
            <person name="Lee M.J."/>
            <person name="Brown I.R."/>
            <person name="Xue W.F."/>
            <person name="Rowe M.L."/>
            <person name="Mulvihill D.P."/>
            <person name="Prentice M.B."/>
            <person name="Howard M.J."/>
            <person name="Warren M.J."/>
        </authorList>
    </citation>
    <scope>STRUCTURE BY NMR OF 1-18</scope>
    <scope>FUNCTION</scope>
    <scope>INTERACTION WITH PDUK</scope>
    <scope>SUBCELLULAR LOCATION</scope>
    <scope>DOMAIN</scope>
    <scope>BIOTECHNOLOGY</scope>
</reference>
<comment type="function">
    <text evidence="1 3">A CoA-acylating aldehyde dehydrogenase required for optimal 1,2-propanediol (1,2-PD) degradation. Optimizes growth in the bacterial microcompartment (BMC) dedicated to 1,2-PD degradation by minimizing propionaldehyde toxicity. NAD(+) and NADH are regenerated internally within the Pdu BMC by the PduP and PduQ enzymes, which reduce NAD(+) and oxidize NADH respectively, although there must also be cofactor transport across the BMC (By similarity). Directly targeted to the BMC (PubMed:24933391).</text>
</comment>
<comment type="function">
    <text evidence="2">Expression of a cosmid containing the full 21-gene pdu operon in E.coli allows E.coli to grow on 1,2-propanediol (1,2-PD) with the appearance of bacterial microcompartments (BMC) in its cytoplasm.</text>
</comment>
<comment type="function">
    <text evidence="5">The 1,2-PD-specific bacterial microcompartment (BMC) concentrates low levels of 1,2-PD catabolic enzymes, concentrates volatile reaction intermediates thus enhancing pathway flux and keeps the level of toxic, mutagenic propionaldehyde low.</text>
</comment>
<comment type="catalytic activity">
    <reaction evidence="1">
        <text>propanal + NAD(+) + CoA = propanoyl-CoA + NADH + H(+)</text>
        <dbReference type="Rhea" id="RHEA:36027"/>
        <dbReference type="ChEBI" id="CHEBI:15378"/>
        <dbReference type="ChEBI" id="CHEBI:17153"/>
        <dbReference type="ChEBI" id="CHEBI:57287"/>
        <dbReference type="ChEBI" id="CHEBI:57392"/>
        <dbReference type="ChEBI" id="CHEBI:57540"/>
        <dbReference type="ChEBI" id="CHEBI:57945"/>
        <dbReference type="EC" id="1.2.1.87"/>
    </reaction>
</comment>
<comment type="pathway">
    <text evidence="2">Polyol metabolism; 1,2-propanediol degradation.</text>
</comment>
<comment type="subunit">
    <text evidence="1 3">Interacts with PduK, probably with its BMC-containing N-terminus (PubMed:24933391). Interacts with shell proteins PduA and PduJ, interacts with PduQ (By similarity).</text>
</comment>
<comment type="subcellular location">
    <subcellularLocation>
        <location evidence="2 6">Bacterial microcompartment</location>
    </subcellularLocation>
</comment>
<comment type="domain">
    <text evidence="3">The N-terminal 18 residues form an alpha-helix which targets this enzyme and foreign proteins (tested with mCherry, pea ascorbate peroxidase and pyruvate decarboxylase) to the BMC.</text>
</comment>
<comment type="biotechnology">
    <text evidence="3">Ethanogenic BMCs can be made in E.coli by targeting pyruvate decarboxylase (pdc) and alcohol dehydrogenase (adh) to them. PduP(1-18)-Pdc and PduD(1-18)-Adh strains targeted to the BMC (PduA, PduB, PduJ, PduK, PduN, PduU) make significantly more ethanol than strains where Pdc and Adh are not targeted to the BMC.</text>
</comment>
<comment type="similarity">
    <text evidence="5">Belongs to the EutE/PduP family.</text>
</comment>
<accession>B1VB75</accession>
<feature type="chain" id="PRO_0000454279" description="Propanal dehydrogenase (CoA-propanoylating)">
    <location>
        <begin position="1"/>
        <end position="461"/>
    </location>
</feature>
<feature type="region of interest" description="Targets protein to the BMC" evidence="3">
    <location>
        <begin position="1"/>
        <end position="18"/>
    </location>
</feature>
<protein>
    <recommendedName>
        <fullName>Propanal dehydrogenase (CoA-propanoylating)</fullName>
        <ecNumber evidence="1">1.2.1.87</ecNumber>
    </recommendedName>
    <alternativeName>
        <fullName evidence="4">Coenzyme-A-acylating propionaldehyde dehydrogenase</fullName>
    </alternativeName>
    <alternativeName>
        <fullName>Propanediol utilization protein PduP</fullName>
    </alternativeName>
</protein>
<proteinExistence type="evidence at protein level"/>
<gene>
    <name evidence="4" type="primary">pduP</name>
</gene>
<organism>
    <name type="scientific">Citrobacter freundii</name>
    <dbReference type="NCBI Taxonomy" id="546"/>
    <lineage>
        <taxon>Bacteria</taxon>
        <taxon>Pseudomonadati</taxon>
        <taxon>Pseudomonadota</taxon>
        <taxon>Gammaproteobacteria</taxon>
        <taxon>Enterobacterales</taxon>
        <taxon>Enterobacteriaceae</taxon>
        <taxon>Citrobacter</taxon>
        <taxon>Citrobacter freundii complex</taxon>
    </lineage>
</organism>
<keyword id="KW-1283">Bacterial microcompartment</keyword>
<keyword id="KW-0520">NAD</keyword>
<keyword id="KW-0560">Oxidoreductase</keyword>